<sequence length="384" mass="41925">MAKHLFTSESVSEGHPDKIADQISDAVLDAILEQDPKARVACETYVKTGMVLVGGEITTSAWVDIEEITRNTVREIGYVHSDMGFDANSCAVLSAIGKQSPDINQGVDRADPLEQGAGDQGLMFGYATNETDVLMPAPITYAHRLVQRQAEVRKNGTLPWLRPDAKSQVTFQYDDGKIVGIDAVVLSTQHSEEIDQKSLQEAVMEEIIKPILPAEWLTSATTFFINPTGRFVIGGPMGDCGLTGRKIIVDTYGGMARHGGGAFSGKDPSKVDRSAAYAARYVAKNIVAAGLADRCEIQVSYAIGVAEPTSIMVETFGTEKVPSEQLTLLVREFFDLRPYGLIQMLDLLHPIYKETAAYGHFGREHFPWEKTDKAQLLRDAAGLK</sequence>
<gene>
    <name evidence="1" type="primary">metK</name>
    <name type="ordered locus">SbBS512_E3374</name>
</gene>
<comment type="function">
    <text evidence="1">Catalyzes the formation of S-adenosylmethionine (AdoMet) from methionine and ATP. The overall synthetic reaction is composed of two sequential steps, AdoMet formation and the subsequent tripolyphosphate hydrolysis which occurs prior to release of AdoMet from the enzyme.</text>
</comment>
<comment type="catalytic activity">
    <reaction evidence="1">
        <text>L-methionine + ATP + H2O = S-adenosyl-L-methionine + phosphate + diphosphate</text>
        <dbReference type="Rhea" id="RHEA:21080"/>
        <dbReference type="ChEBI" id="CHEBI:15377"/>
        <dbReference type="ChEBI" id="CHEBI:30616"/>
        <dbReference type="ChEBI" id="CHEBI:33019"/>
        <dbReference type="ChEBI" id="CHEBI:43474"/>
        <dbReference type="ChEBI" id="CHEBI:57844"/>
        <dbReference type="ChEBI" id="CHEBI:59789"/>
        <dbReference type="EC" id="2.5.1.6"/>
    </reaction>
</comment>
<comment type="cofactor">
    <cofactor evidence="1">
        <name>Mg(2+)</name>
        <dbReference type="ChEBI" id="CHEBI:18420"/>
    </cofactor>
    <text evidence="1">Binds 2 divalent ions per subunit.</text>
</comment>
<comment type="cofactor">
    <cofactor evidence="1">
        <name>K(+)</name>
        <dbReference type="ChEBI" id="CHEBI:29103"/>
    </cofactor>
    <text evidence="1">Binds 1 potassium ion per subunit.</text>
</comment>
<comment type="pathway">
    <text evidence="1">Amino-acid biosynthesis; S-adenosyl-L-methionine biosynthesis; S-adenosyl-L-methionine from L-methionine: step 1/1.</text>
</comment>
<comment type="subunit">
    <text evidence="1">Homotetramer; dimer of dimers.</text>
</comment>
<comment type="subcellular location">
    <subcellularLocation>
        <location evidence="1">Cytoplasm</location>
    </subcellularLocation>
</comment>
<comment type="similarity">
    <text evidence="1">Belongs to the AdoMet synthase family.</text>
</comment>
<name>METK_SHIB3</name>
<accession>B2U0W2</accession>
<reference key="1">
    <citation type="submission" date="2008-05" db="EMBL/GenBank/DDBJ databases">
        <title>Complete sequence of Shigella boydii serotype 18 strain BS512.</title>
        <authorList>
            <person name="Rasko D.A."/>
            <person name="Rosovitz M."/>
            <person name="Maurelli A.T."/>
            <person name="Myers G."/>
            <person name="Seshadri R."/>
            <person name="Cer R."/>
            <person name="Jiang L."/>
            <person name="Ravel J."/>
            <person name="Sebastian Y."/>
        </authorList>
    </citation>
    <scope>NUCLEOTIDE SEQUENCE [LARGE SCALE GENOMIC DNA]</scope>
    <source>
        <strain>CDC 3083-94 / BS512</strain>
    </source>
</reference>
<keyword id="KW-0067">ATP-binding</keyword>
<keyword id="KW-0963">Cytoplasm</keyword>
<keyword id="KW-0460">Magnesium</keyword>
<keyword id="KW-0479">Metal-binding</keyword>
<keyword id="KW-0547">Nucleotide-binding</keyword>
<keyword id="KW-0554">One-carbon metabolism</keyword>
<keyword id="KW-0630">Potassium</keyword>
<keyword id="KW-1185">Reference proteome</keyword>
<keyword id="KW-0808">Transferase</keyword>
<protein>
    <recommendedName>
        <fullName evidence="1">S-adenosylmethionine synthase</fullName>
        <shortName evidence="1">AdoMet synthase</shortName>
        <ecNumber evidence="1">2.5.1.6</ecNumber>
    </recommendedName>
    <alternativeName>
        <fullName evidence="1">MAT</fullName>
    </alternativeName>
    <alternativeName>
        <fullName evidence="1">Methionine adenosyltransferase</fullName>
    </alternativeName>
</protein>
<dbReference type="EC" id="2.5.1.6" evidence="1"/>
<dbReference type="EMBL" id="CP001063">
    <property type="protein sequence ID" value="ACD06954.1"/>
    <property type="molecule type" value="Genomic_DNA"/>
</dbReference>
<dbReference type="RefSeq" id="WP_001062133.1">
    <property type="nucleotide sequence ID" value="NC_010658.1"/>
</dbReference>
<dbReference type="SMR" id="B2U0W2"/>
<dbReference type="STRING" id="344609.SbBS512_E3374"/>
<dbReference type="KEGG" id="sbc:SbBS512_E3374"/>
<dbReference type="HOGENOM" id="CLU_041802_1_1_6"/>
<dbReference type="UniPathway" id="UPA00315">
    <property type="reaction ID" value="UER00080"/>
</dbReference>
<dbReference type="Proteomes" id="UP000001030">
    <property type="component" value="Chromosome"/>
</dbReference>
<dbReference type="GO" id="GO:0005737">
    <property type="term" value="C:cytoplasm"/>
    <property type="evidence" value="ECO:0007669"/>
    <property type="project" value="UniProtKB-SubCell"/>
</dbReference>
<dbReference type="GO" id="GO:0005524">
    <property type="term" value="F:ATP binding"/>
    <property type="evidence" value="ECO:0007669"/>
    <property type="project" value="UniProtKB-UniRule"/>
</dbReference>
<dbReference type="GO" id="GO:0000287">
    <property type="term" value="F:magnesium ion binding"/>
    <property type="evidence" value="ECO:0007669"/>
    <property type="project" value="UniProtKB-UniRule"/>
</dbReference>
<dbReference type="GO" id="GO:0004478">
    <property type="term" value="F:methionine adenosyltransferase activity"/>
    <property type="evidence" value="ECO:0007669"/>
    <property type="project" value="UniProtKB-UniRule"/>
</dbReference>
<dbReference type="GO" id="GO:0006730">
    <property type="term" value="P:one-carbon metabolic process"/>
    <property type="evidence" value="ECO:0007669"/>
    <property type="project" value="UniProtKB-KW"/>
</dbReference>
<dbReference type="GO" id="GO:0006556">
    <property type="term" value="P:S-adenosylmethionine biosynthetic process"/>
    <property type="evidence" value="ECO:0007669"/>
    <property type="project" value="UniProtKB-UniRule"/>
</dbReference>
<dbReference type="CDD" id="cd18079">
    <property type="entry name" value="S-AdoMet_synt"/>
    <property type="match status" value="1"/>
</dbReference>
<dbReference type="FunFam" id="3.30.300.10:FF:000001">
    <property type="entry name" value="S-adenosylmethionine synthase"/>
    <property type="match status" value="1"/>
</dbReference>
<dbReference type="FunFam" id="3.30.300.10:FF:000003">
    <property type="entry name" value="S-adenosylmethionine synthase"/>
    <property type="match status" value="1"/>
</dbReference>
<dbReference type="Gene3D" id="3.30.300.10">
    <property type="match status" value="3"/>
</dbReference>
<dbReference type="HAMAP" id="MF_00086">
    <property type="entry name" value="S_AdoMet_synth1"/>
    <property type="match status" value="1"/>
</dbReference>
<dbReference type="InterPro" id="IPR022631">
    <property type="entry name" value="ADOMET_SYNTHASE_CS"/>
</dbReference>
<dbReference type="InterPro" id="IPR022630">
    <property type="entry name" value="S-AdoMet_synt_C"/>
</dbReference>
<dbReference type="InterPro" id="IPR022629">
    <property type="entry name" value="S-AdoMet_synt_central"/>
</dbReference>
<dbReference type="InterPro" id="IPR022628">
    <property type="entry name" value="S-AdoMet_synt_N"/>
</dbReference>
<dbReference type="InterPro" id="IPR002133">
    <property type="entry name" value="S-AdoMet_synthetase"/>
</dbReference>
<dbReference type="InterPro" id="IPR022636">
    <property type="entry name" value="S-AdoMet_synthetase_sfam"/>
</dbReference>
<dbReference type="NCBIfam" id="TIGR01034">
    <property type="entry name" value="metK"/>
    <property type="match status" value="1"/>
</dbReference>
<dbReference type="PANTHER" id="PTHR11964">
    <property type="entry name" value="S-ADENOSYLMETHIONINE SYNTHETASE"/>
    <property type="match status" value="1"/>
</dbReference>
<dbReference type="Pfam" id="PF02773">
    <property type="entry name" value="S-AdoMet_synt_C"/>
    <property type="match status" value="1"/>
</dbReference>
<dbReference type="Pfam" id="PF02772">
    <property type="entry name" value="S-AdoMet_synt_M"/>
    <property type="match status" value="1"/>
</dbReference>
<dbReference type="Pfam" id="PF00438">
    <property type="entry name" value="S-AdoMet_synt_N"/>
    <property type="match status" value="1"/>
</dbReference>
<dbReference type="PIRSF" id="PIRSF000497">
    <property type="entry name" value="MAT"/>
    <property type="match status" value="1"/>
</dbReference>
<dbReference type="SUPFAM" id="SSF55973">
    <property type="entry name" value="S-adenosylmethionine synthetase"/>
    <property type="match status" value="3"/>
</dbReference>
<dbReference type="PROSITE" id="PS00376">
    <property type="entry name" value="ADOMET_SYNTHASE_1"/>
    <property type="match status" value="1"/>
</dbReference>
<dbReference type="PROSITE" id="PS00377">
    <property type="entry name" value="ADOMET_SYNTHASE_2"/>
    <property type="match status" value="1"/>
</dbReference>
<organism>
    <name type="scientific">Shigella boydii serotype 18 (strain CDC 3083-94 / BS512)</name>
    <dbReference type="NCBI Taxonomy" id="344609"/>
    <lineage>
        <taxon>Bacteria</taxon>
        <taxon>Pseudomonadati</taxon>
        <taxon>Pseudomonadota</taxon>
        <taxon>Gammaproteobacteria</taxon>
        <taxon>Enterobacterales</taxon>
        <taxon>Enterobacteriaceae</taxon>
        <taxon>Shigella</taxon>
    </lineage>
</organism>
<feature type="chain" id="PRO_1000093086" description="S-adenosylmethionine synthase">
    <location>
        <begin position="1"/>
        <end position="384"/>
    </location>
</feature>
<feature type="region of interest" description="Flexible loop" evidence="1">
    <location>
        <begin position="99"/>
        <end position="109"/>
    </location>
</feature>
<feature type="binding site" description="in other chain" evidence="1">
    <location>
        <position position="15"/>
    </location>
    <ligand>
        <name>ATP</name>
        <dbReference type="ChEBI" id="CHEBI:30616"/>
        <note>ligand shared between two neighboring subunits</note>
    </ligand>
</feature>
<feature type="binding site" evidence="1">
    <location>
        <position position="17"/>
    </location>
    <ligand>
        <name>Mg(2+)</name>
        <dbReference type="ChEBI" id="CHEBI:18420"/>
    </ligand>
</feature>
<feature type="binding site" evidence="1">
    <location>
        <position position="43"/>
    </location>
    <ligand>
        <name>K(+)</name>
        <dbReference type="ChEBI" id="CHEBI:29103"/>
    </ligand>
</feature>
<feature type="binding site" description="in other chain" evidence="1">
    <location>
        <position position="56"/>
    </location>
    <ligand>
        <name>L-methionine</name>
        <dbReference type="ChEBI" id="CHEBI:57844"/>
        <note>ligand shared between two neighboring subunits</note>
    </ligand>
</feature>
<feature type="binding site" description="in other chain" evidence="1">
    <location>
        <position position="99"/>
    </location>
    <ligand>
        <name>L-methionine</name>
        <dbReference type="ChEBI" id="CHEBI:57844"/>
        <note>ligand shared between two neighboring subunits</note>
    </ligand>
</feature>
<feature type="binding site" description="in other chain" evidence="1">
    <location>
        <begin position="164"/>
        <end position="166"/>
    </location>
    <ligand>
        <name>ATP</name>
        <dbReference type="ChEBI" id="CHEBI:30616"/>
        <note>ligand shared between two neighboring subunits</note>
    </ligand>
</feature>
<feature type="binding site" description="in other chain" evidence="1">
    <location>
        <begin position="230"/>
        <end position="231"/>
    </location>
    <ligand>
        <name>ATP</name>
        <dbReference type="ChEBI" id="CHEBI:30616"/>
        <note>ligand shared between two neighboring subunits</note>
    </ligand>
</feature>
<feature type="binding site" evidence="1">
    <location>
        <position position="239"/>
    </location>
    <ligand>
        <name>ATP</name>
        <dbReference type="ChEBI" id="CHEBI:30616"/>
        <note>ligand shared between two neighboring subunits</note>
    </ligand>
</feature>
<feature type="binding site" evidence="1">
    <location>
        <position position="239"/>
    </location>
    <ligand>
        <name>L-methionine</name>
        <dbReference type="ChEBI" id="CHEBI:57844"/>
        <note>ligand shared between two neighboring subunits</note>
    </ligand>
</feature>
<feature type="binding site" description="in other chain" evidence="1">
    <location>
        <begin position="245"/>
        <end position="246"/>
    </location>
    <ligand>
        <name>ATP</name>
        <dbReference type="ChEBI" id="CHEBI:30616"/>
        <note>ligand shared between two neighboring subunits</note>
    </ligand>
</feature>
<feature type="binding site" evidence="1">
    <location>
        <position position="262"/>
    </location>
    <ligand>
        <name>ATP</name>
        <dbReference type="ChEBI" id="CHEBI:30616"/>
        <note>ligand shared between two neighboring subunits</note>
    </ligand>
</feature>
<feature type="binding site" evidence="1">
    <location>
        <position position="266"/>
    </location>
    <ligand>
        <name>ATP</name>
        <dbReference type="ChEBI" id="CHEBI:30616"/>
        <note>ligand shared between two neighboring subunits</note>
    </ligand>
</feature>
<feature type="binding site" description="in other chain" evidence="1">
    <location>
        <position position="270"/>
    </location>
    <ligand>
        <name>L-methionine</name>
        <dbReference type="ChEBI" id="CHEBI:57844"/>
        <note>ligand shared between two neighboring subunits</note>
    </ligand>
</feature>
<proteinExistence type="inferred from homology"/>
<evidence type="ECO:0000255" key="1">
    <source>
        <dbReference type="HAMAP-Rule" id="MF_00086"/>
    </source>
</evidence>